<evidence type="ECO:0000250" key="1"/>
<evidence type="ECO:0000305" key="2"/>
<reference key="1">
    <citation type="journal article" date="1997" name="J. Bacteriol.">
        <title>Cloning and characterization of two catA genes in Acinetobacter lwoffii K24.</title>
        <authorList>
            <person name="Kim S.I."/>
            <person name="Leem S.-H."/>
            <person name="Choi J.-S."/>
            <person name="Chung Y.H."/>
            <person name="Kim S."/>
            <person name="Park Y.-M."/>
            <person name="Park Y.K."/>
            <person name="Lee Y.N."/>
            <person name="Ha K.-S."/>
        </authorList>
    </citation>
    <scope>NUCLEOTIDE SEQUENCE [GENOMIC DNA]</scope>
    <scope>PROTEIN SEQUENCE OF 1-30; 27-65 AND 229-247</scope>
    <source>
        <strain>K24</strain>
    </source>
</reference>
<sequence length="275" mass="30399">MNKQAIDALLQKINDSAINEGNPRTKQIVNRIVRDLFYTIEDLDVQPDEFWTALNYLGDAGRSGELGLLAAGLGFEHFLDLRMDEAEAKAGVEGGTPRTIEGPLYVAGAPVSDGHARLDDGTDPGQTLVMRGRVFGEDGKPLANALVEVWHANHLGNYSYFDKSQPAFNLRRSIRTDAEGKYSFRSVVPVGYSVPPQGQTQLLLDQLGRHGHRPAHIHFFVSAPGFRKLTTQINIDGDPYLWDDFAFATRDGLVPAVRQAEVRKANRTAWTVSSR</sequence>
<comment type="function">
    <text>Can cleave 4-methyl-, 4-chloro-, and 3-methoxycatechol at lower rates than catechol, but has no activity with 4-nitrocatechol or protocatechuic acid.</text>
</comment>
<comment type="catalytic activity">
    <reaction>
        <text>catechol + O2 = cis,cis-muconate + 2 H(+)</text>
        <dbReference type="Rhea" id="RHEA:23852"/>
        <dbReference type="ChEBI" id="CHEBI:15378"/>
        <dbReference type="ChEBI" id="CHEBI:15379"/>
        <dbReference type="ChEBI" id="CHEBI:18135"/>
        <dbReference type="ChEBI" id="CHEBI:32379"/>
        <dbReference type="EC" id="1.13.11.1"/>
    </reaction>
</comment>
<comment type="cofactor">
    <cofactor>
        <name>Fe(3+)</name>
        <dbReference type="ChEBI" id="CHEBI:29034"/>
    </cofactor>
    <text>Binds 1 Fe(3+) ion per subunit.</text>
</comment>
<comment type="pathway">
    <text>Aromatic compound metabolism; beta-ketoadipate pathway; 5-oxo-4,5-dihydro-2-furylacetate from catechol: step 1/3.</text>
</comment>
<comment type="subunit">
    <text evidence="2">Homodimer.</text>
</comment>
<comment type="induction">
    <text>By aniline.</text>
</comment>
<comment type="similarity">
    <text evidence="2">Belongs to the intradiol ring-cleavage dioxygenase family.</text>
</comment>
<proteinExistence type="evidence at protein level"/>
<protein>
    <recommendedName>
        <fullName>Catechol 1,2-dioxygenase 2</fullName>
        <ecNumber>1.13.11.1</ecNumber>
    </recommendedName>
    <alternativeName>
        <fullName>1,2-CTD 2</fullName>
    </alternativeName>
    <alternativeName>
        <fullName>CDI2</fullName>
    </alternativeName>
</protein>
<dbReference type="EC" id="1.13.11.1"/>
<dbReference type="EMBL" id="U77659">
    <property type="protein sequence ID" value="AAC31767.1"/>
    <property type="molecule type" value="Genomic_DNA"/>
</dbReference>
<dbReference type="PIR" id="T46825">
    <property type="entry name" value="T46825"/>
</dbReference>
<dbReference type="SMR" id="O33950"/>
<dbReference type="UniPathway" id="UPA00157">
    <property type="reaction ID" value="UER00258"/>
</dbReference>
<dbReference type="GO" id="GO:0018576">
    <property type="term" value="F:catechol 1,2-dioxygenase activity"/>
    <property type="evidence" value="ECO:0007669"/>
    <property type="project" value="UniProtKB-EC"/>
</dbReference>
<dbReference type="GO" id="GO:0008199">
    <property type="term" value="F:ferric iron binding"/>
    <property type="evidence" value="ECO:0007669"/>
    <property type="project" value="InterPro"/>
</dbReference>
<dbReference type="GO" id="GO:0042952">
    <property type="term" value="P:beta-ketoadipate pathway"/>
    <property type="evidence" value="ECO:0007669"/>
    <property type="project" value="UniProtKB-UniPathway"/>
</dbReference>
<dbReference type="GO" id="GO:0019614">
    <property type="term" value="P:catechol-containing compound catabolic process"/>
    <property type="evidence" value="ECO:0007669"/>
    <property type="project" value="InterPro"/>
</dbReference>
<dbReference type="CDD" id="cd03460">
    <property type="entry name" value="1_2-CTD"/>
    <property type="match status" value="1"/>
</dbReference>
<dbReference type="Gene3D" id="2.60.130.10">
    <property type="entry name" value="Aromatic compound dioxygenase"/>
    <property type="match status" value="1"/>
</dbReference>
<dbReference type="InterPro" id="IPR007535">
    <property type="entry name" value="Catechol_dOase_N"/>
</dbReference>
<dbReference type="InterPro" id="IPR012801">
    <property type="entry name" value="Cchol_dOase_prob"/>
</dbReference>
<dbReference type="InterPro" id="IPR000627">
    <property type="entry name" value="Intradiol_dOase_C"/>
</dbReference>
<dbReference type="InterPro" id="IPR015889">
    <property type="entry name" value="Intradiol_dOase_core"/>
</dbReference>
<dbReference type="InterPro" id="IPR050770">
    <property type="entry name" value="Intradiol_RC_Dioxygenase"/>
</dbReference>
<dbReference type="NCBIfam" id="TIGR02439">
    <property type="entry name" value="catechol_proteo"/>
    <property type="match status" value="1"/>
</dbReference>
<dbReference type="PANTHER" id="PTHR33711">
    <property type="entry name" value="DIOXYGENASE, PUTATIVE (AFU_ORTHOLOGUE AFUA_2G02910)-RELATED"/>
    <property type="match status" value="1"/>
</dbReference>
<dbReference type="PANTHER" id="PTHR33711:SF7">
    <property type="entry name" value="INTRADIOL RING-CLEAVAGE DIOXYGENASES DOMAIN-CONTAINING PROTEIN-RELATED"/>
    <property type="match status" value="1"/>
</dbReference>
<dbReference type="Pfam" id="PF00775">
    <property type="entry name" value="Dioxygenase_C"/>
    <property type="match status" value="1"/>
</dbReference>
<dbReference type="Pfam" id="PF04444">
    <property type="entry name" value="Dioxygenase_N"/>
    <property type="match status" value="1"/>
</dbReference>
<dbReference type="SUPFAM" id="SSF49482">
    <property type="entry name" value="Aromatic compound dioxygenase"/>
    <property type="match status" value="1"/>
</dbReference>
<dbReference type="PROSITE" id="PS00083">
    <property type="entry name" value="INTRADIOL_DIOXYGENAS"/>
    <property type="match status" value="1"/>
</dbReference>
<name>CATA2_ACILW</name>
<gene>
    <name type="primary">catA2</name>
</gene>
<feature type="chain" id="PRO_0000085082" description="Catechol 1,2-dioxygenase 2">
    <location>
        <begin position="1"/>
        <end position="275"/>
    </location>
</feature>
<feature type="binding site" evidence="1">
    <location>
        <position position="158"/>
    </location>
    <ligand>
        <name>Fe cation</name>
        <dbReference type="ChEBI" id="CHEBI:24875"/>
    </ligand>
</feature>
<feature type="binding site" evidence="1">
    <location>
        <position position="192"/>
    </location>
    <ligand>
        <name>Fe cation</name>
        <dbReference type="ChEBI" id="CHEBI:24875"/>
    </ligand>
</feature>
<feature type="binding site" evidence="1">
    <location>
        <position position="216"/>
    </location>
    <ligand>
        <name>Fe cation</name>
        <dbReference type="ChEBI" id="CHEBI:24875"/>
    </ligand>
</feature>
<feature type="binding site" evidence="1">
    <location>
        <position position="218"/>
    </location>
    <ligand>
        <name>Fe cation</name>
        <dbReference type="ChEBI" id="CHEBI:24875"/>
    </ligand>
</feature>
<keyword id="KW-0058">Aromatic hydrocarbons catabolism</keyword>
<keyword id="KW-0223">Dioxygenase</keyword>
<keyword id="KW-0903">Direct protein sequencing</keyword>
<keyword id="KW-0408">Iron</keyword>
<keyword id="KW-0479">Metal-binding</keyword>
<keyword id="KW-0560">Oxidoreductase</keyword>
<organism>
    <name type="scientific">Acinetobacter lwoffii</name>
    <dbReference type="NCBI Taxonomy" id="28090"/>
    <lineage>
        <taxon>Bacteria</taxon>
        <taxon>Pseudomonadati</taxon>
        <taxon>Pseudomonadota</taxon>
        <taxon>Gammaproteobacteria</taxon>
        <taxon>Moraxellales</taxon>
        <taxon>Moraxellaceae</taxon>
        <taxon>Acinetobacter</taxon>
    </lineage>
</organism>
<accession>O33950</accession>